<feature type="chain" id="PRO_0000148823" description="Aspartyl/glutamyl-tRNA(Asn/Gln) amidotransferase subunit B">
    <location>
        <begin position="1"/>
        <end position="481"/>
    </location>
</feature>
<proteinExistence type="evidence at protein level"/>
<protein>
    <recommendedName>
        <fullName evidence="1">Aspartyl/glutamyl-tRNA(Asn/Gln) amidotransferase subunit B</fullName>
        <shortName evidence="1">Asp/Glu-ADT subunit B</shortName>
        <ecNumber evidence="1">6.3.5.-</ecNumber>
    </recommendedName>
</protein>
<organism>
    <name type="scientific">Pseudomonas aeruginosa (strain ATCC 15692 / DSM 22644 / CIP 104116 / JCM 14847 / LMG 12228 / 1C / PRS 101 / PAO1)</name>
    <dbReference type="NCBI Taxonomy" id="208964"/>
    <lineage>
        <taxon>Bacteria</taxon>
        <taxon>Pseudomonadati</taxon>
        <taxon>Pseudomonadota</taxon>
        <taxon>Gammaproteobacteria</taxon>
        <taxon>Pseudomonadales</taxon>
        <taxon>Pseudomonadaceae</taxon>
        <taxon>Pseudomonas</taxon>
    </lineage>
</organism>
<dbReference type="EC" id="6.3.5.-" evidence="1"/>
<dbReference type="EMBL" id="AE004091">
    <property type="protein sequence ID" value="AAG07872.1"/>
    <property type="molecule type" value="Genomic_DNA"/>
</dbReference>
<dbReference type="PIR" id="A83085">
    <property type="entry name" value="A83085"/>
</dbReference>
<dbReference type="RefSeq" id="NP_253174.1">
    <property type="nucleotide sequence ID" value="NC_002516.2"/>
</dbReference>
<dbReference type="RefSeq" id="WP_003112870.1">
    <property type="nucleotide sequence ID" value="NC_002516.2"/>
</dbReference>
<dbReference type="PDB" id="4WJ3">
    <property type="method" value="X-ray"/>
    <property type="resolution" value="3.70 A"/>
    <property type="chains" value="B/E/H/K=1-403"/>
</dbReference>
<dbReference type="PDBsum" id="4WJ3"/>
<dbReference type="SMR" id="Q9HVT7"/>
<dbReference type="STRING" id="208964.PA4484"/>
<dbReference type="PaxDb" id="208964-PA4484"/>
<dbReference type="GeneID" id="881181"/>
<dbReference type="KEGG" id="pae:PA4484"/>
<dbReference type="PATRIC" id="fig|208964.12.peg.4694"/>
<dbReference type="PseudoCAP" id="PA4484"/>
<dbReference type="HOGENOM" id="CLU_019240_0_0_6"/>
<dbReference type="InParanoid" id="Q9HVT7"/>
<dbReference type="OrthoDB" id="9804078at2"/>
<dbReference type="PhylomeDB" id="Q9HVT7"/>
<dbReference type="BioCyc" id="PAER208964:G1FZ6-4573-MONOMER"/>
<dbReference type="EvolutionaryTrace" id="Q9HVT7"/>
<dbReference type="Proteomes" id="UP000002438">
    <property type="component" value="Chromosome"/>
</dbReference>
<dbReference type="GO" id="GO:0050566">
    <property type="term" value="F:asparaginyl-tRNA synthase (glutamine-hydrolyzing) activity"/>
    <property type="evidence" value="ECO:0007669"/>
    <property type="project" value="RHEA"/>
</dbReference>
<dbReference type="GO" id="GO:0005524">
    <property type="term" value="F:ATP binding"/>
    <property type="evidence" value="ECO:0007669"/>
    <property type="project" value="UniProtKB-KW"/>
</dbReference>
<dbReference type="GO" id="GO:0050567">
    <property type="term" value="F:glutaminyl-tRNA synthase (glutamine-hydrolyzing) activity"/>
    <property type="evidence" value="ECO:0000318"/>
    <property type="project" value="GO_Central"/>
</dbReference>
<dbReference type="GO" id="GO:0070681">
    <property type="term" value="P:glutaminyl-tRNAGln biosynthesis via transamidation"/>
    <property type="evidence" value="ECO:0000318"/>
    <property type="project" value="GO_Central"/>
</dbReference>
<dbReference type="GO" id="GO:0006412">
    <property type="term" value="P:translation"/>
    <property type="evidence" value="ECO:0007669"/>
    <property type="project" value="UniProtKB-UniRule"/>
</dbReference>
<dbReference type="FunFam" id="1.10.10.410:FF:000001">
    <property type="entry name" value="Aspartyl/glutamyl-tRNA(Asn/Gln) amidotransferase subunit B"/>
    <property type="match status" value="1"/>
</dbReference>
<dbReference type="FunFam" id="1.10.150.380:FF:000001">
    <property type="entry name" value="Aspartyl/glutamyl-tRNA(Asn/Gln) amidotransferase subunit B"/>
    <property type="match status" value="1"/>
</dbReference>
<dbReference type="Gene3D" id="1.10.10.410">
    <property type="match status" value="1"/>
</dbReference>
<dbReference type="Gene3D" id="1.10.150.380">
    <property type="entry name" value="GatB domain, N-terminal subdomain"/>
    <property type="match status" value="1"/>
</dbReference>
<dbReference type="HAMAP" id="MF_00121">
    <property type="entry name" value="GatB"/>
    <property type="match status" value="1"/>
</dbReference>
<dbReference type="InterPro" id="IPR017959">
    <property type="entry name" value="Asn/Gln-tRNA_amidoTrfase_suB/E"/>
</dbReference>
<dbReference type="InterPro" id="IPR006075">
    <property type="entry name" value="Asn/Gln-tRNA_Trfase_suB/E_cat"/>
</dbReference>
<dbReference type="InterPro" id="IPR018027">
    <property type="entry name" value="Asn/Gln_amidotransferase"/>
</dbReference>
<dbReference type="InterPro" id="IPR003789">
    <property type="entry name" value="Asn/Gln_tRNA_amidoTrase-B-like"/>
</dbReference>
<dbReference type="InterPro" id="IPR004413">
    <property type="entry name" value="GatB"/>
</dbReference>
<dbReference type="InterPro" id="IPR042114">
    <property type="entry name" value="GatB_C_1"/>
</dbReference>
<dbReference type="InterPro" id="IPR023168">
    <property type="entry name" value="GatB_Yqey_C_2"/>
</dbReference>
<dbReference type="InterPro" id="IPR017958">
    <property type="entry name" value="Gln-tRNA_amidoTrfase_suB_CS"/>
</dbReference>
<dbReference type="InterPro" id="IPR014746">
    <property type="entry name" value="Gln_synth/guanido_kin_cat_dom"/>
</dbReference>
<dbReference type="NCBIfam" id="TIGR00133">
    <property type="entry name" value="gatB"/>
    <property type="match status" value="1"/>
</dbReference>
<dbReference type="NCBIfam" id="NF004012">
    <property type="entry name" value="PRK05477.1-2"/>
    <property type="match status" value="1"/>
</dbReference>
<dbReference type="NCBIfam" id="NF004014">
    <property type="entry name" value="PRK05477.1-4"/>
    <property type="match status" value="1"/>
</dbReference>
<dbReference type="NCBIfam" id="NF004015">
    <property type="entry name" value="PRK05477.1-5"/>
    <property type="match status" value="1"/>
</dbReference>
<dbReference type="PANTHER" id="PTHR11659">
    <property type="entry name" value="GLUTAMYL-TRNA GLN AMIDOTRANSFERASE SUBUNIT B MITOCHONDRIAL AND PROKARYOTIC PET112-RELATED"/>
    <property type="match status" value="1"/>
</dbReference>
<dbReference type="PANTHER" id="PTHR11659:SF0">
    <property type="entry name" value="GLUTAMYL-TRNA(GLN) AMIDOTRANSFERASE SUBUNIT B, MITOCHONDRIAL"/>
    <property type="match status" value="1"/>
</dbReference>
<dbReference type="Pfam" id="PF02934">
    <property type="entry name" value="GatB_N"/>
    <property type="match status" value="1"/>
</dbReference>
<dbReference type="Pfam" id="PF02637">
    <property type="entry name" value="GatB_Yqey"/>
    <property type="match status" value="1"/>
</dbReference>
<dbReference type="SMART" id="SM00845">
    <property type="entry name" value="GatB_Yqey"/>
    <property type="match status" value="1"/>
</dbReference>
<dbReference type="SUPFAM" id="SSF89095">
    <property type="entry name" value="GatB/YqeY motif"/>
    <property type="match status" value="1"/>
</dbReference>
<dbReference type="SUPFAM" id="SSF55931">
    <property type="entry name" value="Glutamine synthetase/guanido kinase"/>
    <property type="match status" value="1"/>
</dbReference>
<dbReference type="PROSITE" id="PS01234">
    <property type="entry name" value="GATB"/>
    <property type="match status" value="1"/>
</dbReference>
<comment type="function">
    <text evidence="1">Allows the formation of correctly charged Asn-tRNA(Asn) or Gln-tRNA(Gln) through the transamidation of misacylated Asp-tRNA(Asn) or Glu-tRNA(Gln) in organisms which lack either or both of asparaginyl-tRNA or glutaminyl-tRNA synthetases. The reaction takes place in the presence of glutamine and ATP through an activated phospho-Asp-tRNA(Asn) or phospho-Glu-tRNA(Gln).</text>
</comment>
<comment type="catalytic activity">
    <reaction evidence="1">
        <text>L-glutamyl-tRNA(Gln) + L-glutamine + ATP + H2O = L-glutaminyl-tRNA(Gln) + L-glutamate + ADP + phosphate + H(+)</text>
        <dbReference type="Rhea" id="RHEA:17521"/>
        <dbReference type="Rhea" id="RHEA-COMP:9681"/>
        <dbReference type="Rhea" id="RHEA-COMP:9684"/>
        <dbReference type="ChEBI" id="CHEBI:15377"/>
        <dbReference type="ChEBI" id="CHEBI:15378"/>
        <dbReference type="ChEBI" id="CHEBI:29985"/>
        <dbReference type="ChEBI" id="CHEBI:30616"/>
        <dbReference type="ChEBI" id="CHEBI:43474"/>
        <dbReference type="ChEBI" id="CHEBI:58359"/>
        <dbReference type="ChEBI" id="CHEBI:78520"/>
        <dbReference type="ChEBI" id="CHEBI:78521"/>
        <dbReference type="ChEBI" id="CHEBI:456216"/>
    </reaction>
</comment>
<comment type="catalytic activity">
    <reaction evidence="1">
        <text>L-aspartyl-tRNA(Asn) + L-glutamine + ATP + H2O = L-asparaginyl-tRNA(Asn) + L-glutamate + ADP + phosphate + 2 H(+)</text>
        <dbReference type="Rhea" id="RHEA:14513"/>
        <dbReference type="Rhea" id="RHEA-COMP:9674"/>
        <dbReference type="Rhea" id="RHEA-COMP:9677"/>
        <dbReference type="ChEBI" id="CHEBI:15377"/>
        <dbReference type="ChEBI" id="CHEBI:15378"/>
        <dbReference type="ChEBI" id="CHEBI:29985"/>
        <dbReference type="ChEBI" id="CHEBI:30616"/>
        <dbReference type="ChEBI" id="CHEBI:43474"/>
        <dbReference type="ChEBI" id="CHEBI:58359"/>
        <dbReference type="ChEBI" id="CHEBI:78515"/>
        <dbReference type="ChEBI" id="CHEBI:78516"/>
        <dbReference type="ChEBI" id="CHEBI:456216"/>
    </reaction>
</comment>
<comment type="subunit">
    <text evidence="1">Heterotrimer of A, B and C subunits.</text>
</comment>
<comment type="similarity">
    <text evidence="1">Belongs to the GatB/GatE family. GatB subfamily.</text>
</comment>
<evidence type="ECO:0000255" key="1">
    <source>
        <dbReference type="HAMAP-Rule" id="MF_00121"/>
    </source>
</evidence>
<accession>Q9HVT7</accession>
<name>GATB_PSEAE</name>
<sequence>MQWETVIGLEIHAQLATQSKIFSGSSTAFGAAPNTQASLVDLAMPGTLPVLNEEAVRMACLFGLAIDARIDRQNVFARKNYFYPDLPKGYQTSQMDHPIVGKGHLDITLEDGTTKRIGITRAHLEEDAGKSLHEDFQGMSGIDLNRAGTPLLEIVSEPDIRSAKEAVAYVKAIHALVRYLGICDGNMAEGSLRCDCNVSVRPKGQAEFGTRAEIKNVNSFRFIEKAINHEIQRQIELIEDGGKVVQETRLYDPNKDETRSMRGKEEANDYRYFPCPDLLPVVIEPEYLAKLREQLPELPVQKRERFESQYGLSAYDASVLSASREMADYFEKVQGICGDAKLAANWVMVELGSLLNKDGLEIEQSPVSAEQLGGMILRIKDNTISGKLAKMVFEAMANGEGSADQIIEAKGLKQVTDSGAIEKMLDEVLAANAEQVEQYRAADEAKRGKMFGFFVGQAMKASKGKANPQQVNELLKKKLEA</sequence>
<gene>
    <name evidence="1" type="primary">gatB</name>
    <name type="ordered locus">PA4484</name>
</gene>
<keyword id="KW-0002">3D-structure</keyword>
<keyword id="KW-0067">ATP-binding</keyword>
<keyword id="KW-0436">Ligase</keyword>
<keyword id="KW-0547">Nucleotide-binding</keyword>
<keyword id="KW-0648">Protein biosynthesis</keyword>
<keyword id="KW-1185">Reference proteome</keyword>
<reference key="1">
    <citation type="journal article" date="2000" name="Nature">
        <title>Complete genome sequence of Pseudomonas aeruginosa PAO1, an opportunistic pathogen.</title>
        <authorList>
            <person name="Stover C.K."/>
            <person name="Pham X.-Q.T."/>
            <person name="Erwin A.L."/>
            <person name="Mizoguchi S.D."/>
            <person name="Warrener P."/>
            <person name="Hickey M.J."/>
            <person name="Brinkman F.S.L."/>
            <person name="Hufnagle W.O."/>
            <person name="Kowalik D.J."/>
            <person name="Lagrou M."/>
            <person name="Garber R.L."/>
            <person name="Goltry L."/>
            <person name="Tolentino E."/>
            <person name="Westbrock-Wadman S."/>
            <person name="Yuan Y."/>
            <person name="Brody L.L."/>
            <person name="Coulter S.N."/>
            <person name="Folger K.R."/>
            <person name="Kas A."/>
            <person name="Larbig K."/>
            <person name="Lim R.M."/>
            <person name="Smith K.A."/>
            <person name="Spencer D.H."/>
            <person name="Wong G.K.-S."/>
            <person name="Wu Z."/>
            <person name="Paulsen I.T."/>
            <person name="Reizer J."/>
            <person name="Saier M.H. Jr."/>
            <person name="Hancock R.E.W."/>
            <person name="Lory S."/>
            <person name="Olson M.V."/>
        </authorList>
    </citation>
    <scope>NUCLEOTIDE SEQUENCE [LARGE SCALE GENOMIC DNA]</scope>
    <source>
        <strain>ATCC 15692 / DSM 22644 / CIP 104116 / JCM 14847 / LMG 12228 / 1C / PRS 101 / PAO1</strain>
    </source>
</reference>